<keyword id="KW-0997">Cell inner membrane</keyword>
<keyword id="KW-1003">Cell membrane</keyword>
<keyword id="KW-0472">Membrane</keyword>
<keyword id="KW-0511">Multifunctional enzyme</keyword>
<keyword id="KW-0520">NAD</keyword>
<keyword id="KW-0874">Quinone</keyword>
<keyword id="KW-1278">Translocase</keyword>
<keyword id="KW-0813">Transport</keyword>
<keyword id="KW-0830">Ubiquinone</keyword>
<name>NUOCD_PSYCK</name>
<sequence length="591" mass="68015">MVTVVENTDPKIKPVPAVIKELEEKYAGKFVVQHTVDDIPTVWVARADLLDVLLFLRKLPKPYVMLFDLSAIDERLRQHRQGLPDSDFTVFYHLMSLERNSDVRIKVALSEEDLNVPSATQIWPNANWYEREVWDMFGIVFTGHPHLTRILLPKYWEGHPLRKEYHARATEFTPYFLNTAKQQYEQENLRFVPEEWGMKRSGRDEDFMFLNIGPNHPSAHGAFRLVLQLDGEEVVDCIPDIGYHHRGAEKMAERQTWHSFIPYTDRIDYLGGVMNELPYIMSVEKLAGITIPPRAETIRVMMSEFFRITNNLLFVGTFIQDAGGMTPVFYMFTDRQKAYDVIEAVTGYRMHPAWFRIGGTAHDLPRGWQRLVREFLDWMPKRLDEYVKAALQNSVLKGRTQGVAQYNTKQALAWGVTGAGLRATGLDFDLRKARPYMGYENYDFEVPVGYNGDAYDRCMVKVEEMRQSLRIIRQCMDNMPQGPYKADHPLAVPPPKDRTLNDIETLINHFISVSWGPVMPAGECTTIVEATKGLNSYYITSDKATMSYRTRIRTPTFAHLQQMPSVINGSLVSDAIMYLASIDIVMADCDR</sequence>
<accession>Q1QD95</accession>
<protein>
    <recommendedName>
        <fullName evidence="1">NADH-quinone oxidoreductase subunit C/D</fullName>
        <ecNumber evidence="1">7.1.1.-</ecNumber>
    </recommendedName>
    <alternativeName>
        <fullName evidence="1">NADH dehydrogenase I subunit C/D</fullName>
    </alternativeName>
    <alternativeName>
        <fullName evidence="1">NDH-1 subunit C/D</fullName>
    </alternativeName>
</protein>
<dbReference type="EC" id="7.1.1.-" evidence="1"/>
<dbReference type="EMBL" id="CP000323">
    <property type="protein sequence ID" value="ABE74358.1"/>
    <property type="molecule type" value="Genomic_DNA"/>
</dbReference>
<dbReference type="RefSeq" id="WP_011512926.1">
    <property type="nucleotide sequence ID" value="NC_007969.1"/>
</dbReference>
<dbReference type="SMR" id="Q1QD95"/>
<dbReference type="STRING" id="335284.Pcryo_0575"/>
<dbReference type="KEGG" id="pcr:Pcryo_0575"/>
<dbReference type="eggNOG" id="COG0649">
    <property type="taxonomic scope" value="Bacteria"/>
</dbReference>
<dbReference type="eggNOG" id="COG0852">
    <property type="taxonomic scope" value="Bacteria"/>
</dbReference>
<dbReference type="HOGENOM" id="CLU_015134_3_2_6"/>
<dbReference type="Proteomes" id="UP000002425">
    <property type="component" value="Chromosome"/>
</dbReference>
<dbReference type="GO" id="GO:0030964">
    <property type="term" value="C:NADH dehydrogenase complex"/>
    <property type="evidence" value="ECO:0007669"/>
    <property type="project" value="InterPro"/>
</dbReference>
<dbReference type="GO" id="GO:0005886">
    <property type="term" value="C:plasma membrane"/>
    <property type="evidence" value="ECO:0007669"/>
    <property type="project" value="UniProtKB-SubCell"/>
</dbReference>
<dbReference type="GO" id="GO:0051287">
    <property type="term" value="F:NAD binding"/>
    <property type="evidence" value="ECO:0007669"/>
    <property type="project" value="InterPro"/>
</dbReference>
<dbReference type="GO" id="GO:0008137">
    <property type="term" value="F:NADH dehydrogenase (ubiquinone) activity"/>
    <property type="evidence" value="ECO:0007669"/>
    <property type="project" value="InterPro"/>
</dbReference>
<dbReference type="GO" id="GO:0050136">
    <property type="term" value="F:NADH:ubiquinone reductase (non-electrogenic) activity"/>
    <property type="evidence" value="ECO:0007669"/>
    <property type="project" value="UniProtKB-UniRule"/>
</dbReference>
<dbReference type="GO" id="GO:0048038">
    <property type="term" value="F:quinone binding"/>
    <property type="evidence" value="ECO:0007669"/>
    <property type="project" value="UniProtKB-KW"/>
</dbReference>
<dbReference type="FunFam" id="1.10.645.10:FF:000001">
    <property type="entry name" value="NADH-quinone oxidoreductase subunit C/D"/>
    <property type="match status" value="1"/>
</dbReference>
<dbReference type="Gene3D" id="1.10.645.10">
    <property type="entry name" value="Cytochrome-c3 Hydrogenase, chain B"/>
    <property type="match status" value="1"/>
</dbReference>
<dbReference type="Gene3D" id="3.30.460.80">
    <property type="entry name" value="NADH:ubiquinone oxidoreductase, 30kDa subunit"/>
    <property type="match status" value="1"/>
</dbReference>
<dbReference type="HAMAP" id="MF_01357">
    <property type="entry name" value="NDH1_NuoC"/>
    <property type="match status" value="1"/>
</dbReference>
<dbReference type="HAMAP" id="MF_01359">
    <property type="entry name" value="NDH1_NuoCD_1"/>
    <property type="match status" value="1"/>
</dbReference>
<dbReference type="HAMAP" id="MF_01358">
    <property type="entry name" value="NDH1_NuoD"/>
    <property type="match status" value="1"/>
</dbReference>
<dbReference type="InterPro" id="IPR010218">
    <property type="entry name" value="NADH_DH_suC"/>
</dbReference>
<dbReference type="InterPro" id="IPR023062">
    <property type="entry name" value="NADH_DH_suCD"/>
</dbReference>
<dbReference type="InterPro" id="IPR001135">
    <property type="entry name" value="NADH_Q_OxRdtase_suD"/>
</dbReference>
<dbReference type="InterPro" id="IPR037232">
    <property type="entry name" value="NADH_quin_OxRdtase_su_C/D-like"/>
</dbReference>
<dbReference type="InterPro" id="IPR001268">
    <property type="entry name" value="NADH_UbQ_OxRdtase_30kDa_su"/>
</dbReference>
<dbReference type="InterPro" id="IPR014029">
    <property type="entry name" value="NADH_UbQ_OxRdtase_49kDa_CS"/>
</dbReference>
<dbReference type="InterPro" id="IPR022885">
    <property type="entry name" value="NDH1_su_D/H"/>
</dbReference>
<dbReference type="InterPro" id="IPR029014">
    <property type="entry name" value="NiFe-Hase_large"/>
</dbReference>
<dbReference type="NCBIfam" id="TIGR01961">
    <property type="entry name" value="NuoC_fam"/>
    <property type="match status" value="1"/>
</dbReference>
<dbReference type="NCBIfam" id="TIGR01962">
    <property type="entry name" value="NuoD"/>
    <property type="match status" value="1"/>
</dbReference>
<dbReference type="NCBIfam" id="NF004739">
    <property type="entry name" value="PRK06075.1"/>
    <property type="match status" value="1"/>
</dbReference>
<dbReference type="NCBIfam" id="NF008728">
    <property type="entry name" value="PRK11742.1"/>
    <property type="match status" value="1"/>
</dbReference>
<dbReference type="PANTHER" id="PTHR11993:SF45">
    <property type="entry name" value="NADH-QUINONE OXIDOREDUCTASE SUBUNIT C_D"/>
    <property type="match status" value="1"/>
</dbReference>
<dbReference type="PANTHER" id="PTHR11993">
    <property type="entry name" value="NADH-UBIQUINONE OXIDOREDUCTASE 49 KDA SUBUNIT"/>
    <property type="match status" value="1"/>
</dbReference>
<dbReference type="Pfam" id="PF00329">
    <property type="entry name" value="Complex1_30kDa"/>
    <property type="match status" value="1"/>
</dbReference>
<dbReference type="Pfam" id="PF00346">
    <property type="entry name" value="Complex1_49kDa"/>
    <property type="match status" value="1"/>
</dbReference>
<dbReference type="SUPFAM" id="SSF56762">
    <property type="entry name" value="HydB/Nqo4-like"/>
    <property type="match status" value="1"/>
</dbReference>
<dbReference type="SUPFAM" id="SSF143243">
    <property type="entry name" value="Nqo5-like"/>
    <property type="match status" value="1"/>
</dbReference>
<dbReference type="PROSITE" id="PS00535">
    <property type="entry name" value="COMPLEX1_49K"/>
    <property type="match status" value="1"/>
</dbReference>
<feature type="chain" id="PRO_0000358669" description="NADH-quinone oxidoreductase subunit C/D">
    <location>
        <begin position="1"/>
        <end position="591"/>
    </location>
</feature>
<feature type="region of interest" description="NADH dehydrogenase I subunit C" evidence="1">
    <location>
        <begin position="1"/>
        <end position="182"/>
    </location>
</feature>
<feature type="region of interest" description="NADH dehydrogenase I subunit D" evidence="1">
    <location>
        <begin position="206"/>
        <end position="591"/>
    </location>
</feature>
<organism>
    <name type="scientific">Psychrobacter cryohalolentis (strain ATCC BAA-1226 / DSM 17306 / VKM B-2378 / K5)</name>
    <dbReference type="NCBI Taxonomy" id="335284"/>
    <lineage>
        <taxon>Bacteria</taxon>
        <taxon>Pseudomonadati</taxon>
        <taxon>Pseudomonadota</taxon>
        <taxon>Gammaproteobacteria</taxon>
        <taxon>Moraxellales</taxon>
        <taxon>Moraxellaceae</taxon>
        <taxon>Psychrobacter</taxon>
    </lineage>
</organism>
<proteinExistence type="inferred from homology"/>
<reference key="1">
    <citation type="submission" date="2006-03" db="EMBL/GenBank/DDBJ databases">
        <title>Complete sequence of chromosome of Psychrobacter cryohalolentis K5.</title>
        <authorList>
            <consortium name="US DOE Joint Genome Institute"/>
            <person name="Copeland A."/>
            <person name="Lucas S."/>
            <person name="Lapidus A."/>
            <person name="Barry K."/>
            <person name="Detter J.C."/>
            <person name="Glavina T."/>
            <person name="Hammon N."/>
            <person name="Israni S."/>
            <person name="Dalin E."/>
            <person name="Tice H."/>
            <person name="Pitluck S."/>
            <person name="Brettin T."/>
            <person name="Bruce D."/>
            <person name="Han C."/>
            <person name="Tapia R."/>
            <person name="Sims D.R."/>
            <person name="Gilna P."/>
            <person name="Schmutz J."/>
            <person name="Larimer F."/>
            <person name="Land M."/>
            <person name="Hauser L."/>
            <person name="Kyrpides N."/>
            <person name="Kim E."/>
            <person name="Richardson P."/>
        </authorList>
    </citation>
    <scope>NUCLEOTIDE SEQUENCE [LARGE SCALE GENOMIC DNA]</scope>
    <source>
        <strain>ATCC BAA-1226 / DSM 17306 / VKM B-2378 / K5</strain>
    </source>
</reference>
<gene>
    <name evidence="1" type="primary">nuoC</name>
    <name evidence="1" type="synonym">nuoCD</name>
    <name evidence="1" type="synonym">nuoD</name>
    <name type="ordered locus">Pcryo_0575</name>
</gene>
<comment type="function">
    <text evidence="1">NDH-1 shuttles electrons from NADH, via FMN and iron-sulfur (Fe-S) centers, to quinones in the respiratory chain. The immediate electron acceptor for the enzyme in this species is believed to be ubiquinone. Couples the redox reaction to proton translocation (for every two electrons transferred, four hydrogen ions are translocated across the cytoplasmic membrane), and thus conserves the redox energy in a proton gradient.</text>
</comment>
<comment type="catalytic activity">
    <reaction evidence="1">
        <text>a quinone + NADH + 5 H(+)(in) = a quinol + NAD(+) + 4 H(+)(out)</text>
        <dbReference type="Rhea" id="RHEA:57888"/>
        <dbReference type="ChEBI" id="CHEBI:15378"/>
        <dbReference type="ChEBI" id="CHEBI:24646"/>
        <dbReference type="ChEBI" id="CHEBI:57540"/>
        <dbReference type="ChEBI" id="CHEBI:57945"/>
        <dbReference type="ChEBI" id="CHEBI:132124"/>
    </reaction>
</comment>
<comment type="subunit">
    <text evidence="1">NDH-1 is composed of 13 different subunits. Subunits NuoB, CD, E, F, and G constitute the peripheral sector of the complex.</text>
</comment>
<comment type="subcellular location">
    <subcellularLocation>
        <location evidence="1">Cell inner membrane</location>
        <topology evidence="1">Peripheral membrane protein</topology>
        <orientation evidence="1">Cytoplasmic side</orientation>
    </subcellularLocation>
</comment>
<comment type="similarity">
    <text evidence="1">In the N-terminal section; belongs to the complex I 30 kDa subunit family.</text>
</comment>
<comment type="similarity">
    <text evidence="1">In the C-terminal section; belongs to the complex I 49 kDa subunit family.</text>
</comment>
<evidence type="ECO:0000255" key="1">
    <source>
        <dbReference type="HAMAP-Rule" id="MF_01359"/>
    </source>
</evidence>